<feature type="chain" id="PRO_1000127004" description="Peptidase B">
    <location>
        <begin position="1"/>
        <end position="427"/>
    </location>
</feature>
<feature type="active site" evidence="1">
    <location>
        <position position="207"/>
    </location>
</feature>
<feature type="active site" evidence="1">
    <location>
        <position position="281"/>
    </location>
</feature>
<feature type="binding site" evidence="1">
    <location>
        <position position="195"/>
    </location>
    <ligand>
        <name>Mn(2+)</name>
        <dbReference type="ChEBI" id="CHEBI:29035"/>
        <label>2</label>
    </ligand>
</feature>
<feature type="binding site" evidence="1">
    <location>
        <position position="200"/>
    </location>
    <ligand>
        <name>Mn(2+)</name>
        <dbReference type="ChEBI" id="CHEBI:29035"/>
        <label>1</label>
    </ligand>
</feature>
<feature type="binding site" evidence="1">
    <location>
        <position position="200"/>
    </location>
    <ligand>
        <name>Mn(2+)</name>
        <dbReference type="ChEBI" id="CHEBI:29035"/>
        <label>2</label>
    </ligand>
</feature>
<feature type="binding site" evidence="1">
    <location>
        <position position="218"/>
    </location>
    <ligand>
        <name>Mn(2+)</name>
        <dbReference type="ChEBI" id="CHEBI:29035"/>
        <label>2</label>
    </ligand>
</feature>
<feature type="binding site" evidence="1">
    <location>
        <position position="277"/>
    </location>
    <ligand>
        <name>Mn(2+)</name>
        <dbReference type="ChEBI" id="CHEBI:29035"/>
        <label>1</label>
    </ligand>
</feature>
<feature type="binding site" evidence="1">
    <location>
        <position position="279"/>
    </location>
    <ligand>
        <name>Mn(2+)</name>
        <dbReference type="ChEBI" id="CHEBI:29035"/>
        <label>1</label>
    </ligand>
</feature>
<feature type="binding site" evidence="1">
    <location>
        <position position="279"/>
    </location>
    <ligand>
        <name>Mn(2+)</name>
        <dbReference type="ChEBI" id="CHEBI:29035"/>
        <label>2</label>
    </ligand>
</feature>
<dbReference type="EC" id="3.4.11.23" evidence="1"/>
<dbReference type="EMBL" id="CU928164">
    <property type="protein sequence ID" value="CAR18846.1"/>
    <property type="molecule type" value="Genomic_DNA"/>
</dbReference>
<dbReference type="RefSeq" id="WP_000133559.1">
    <property type="nucleotide sequence ID" value="NC_011750.1"/>
</dbReference>
<dbReference type="RefSeq" id="YP_002408662.1">
    <property type="nucleotide sequence ID" value="NC_011750.1"/>
</dbReference>
<dbReference type="SMR" id="B7NRH2"/>
<dbReference type="STRING" id="585057.ECIAI39_2724"/>
<dbReference type="MEROPS" id="M17.004"/>
<dbReference type="KEGG" id="ect:ECIAI39_2724"/>
<dbReference type="PATRIC" id="fig|585057.6.peg.2832"/>
<dbReference type="HOGENOM" id="CLU_013734_7_1_6"/>
<dbReference type="Proteomes" id="UP000000749">
    <property type="component" value="Chromosome"/>
</dbReference>
<dbReference type="GO" id="GO:0005737">
    <property type="term" value="C:cytoplasm"/>
    <property type="evidence" value="ECO:0007669"/>
    <property type="project" value="UniProtKB-SubCell"/>
</dbReference>
<dbReference type="GO" id="GO:0030145">
    <property type="term" value="F:manganese ion binding"/>
    <property type="evidence" value="ECO:0007669"/>
    <property type="project" value="UniProtKB-UniRule"/>
</dbReference>
<dbReference type="GO" id="GO:0070006">
    <property type="term" value="F:metalloaminopeptidase activity"/>
    <property type="evidence" value="ECO:0007669"/>
    <property type="project" value="InterPro"/>
</dbReference>
<dbReference type="GO" id="GO:0006508">
    <property type="term" value="P:proteolysis"/>
    <property type="evidence" value="ECO:0007669"/>
    <property type="project" value="UniProtKB-UniRule"/>
</dbReference>
<dbReference type="CDD" id="cd00433">
    <property type="entry name" value="Peptidase_M17"/>
    <property type="match status" value="1"/>
</dbReference>
<dbReference type="FunFam" id="3.40.630.10:FF:000037">
    <property type="entry name" value="Peptidase B"/>
    <property type="match status" value="1"/>
</dbReference>
<dbReference type="Gene3D" id="3.40.630.10">
    <property type="entry name" value="Zn peptidases"/>
    <property type="match status" value="1"/>
</dbReference>
<dbReference type="HAMAP" id="MF_00504">
    <property type="entry name" value="Aminopeptidase_M17"/>
    <property type="match status" value="1"/>
</dbReference>
<dbReference type="InterPro" id="IPR011356">
    <property type="entry name" value="Leucine_aapep/pepB"/>
</dbReference>
<dbReference type="InterPro" id="IPR047620">
    <property type="entry name" value="M17_PepB-like_N"/>
</dbReference>
<dbReference type="InterPro" id="IPR008330">
    <property type="entry name" value="Pept_M17_PepB"/>
</dbReference>
<dbReference type="InterPro" id="IPR000819">
    <property type="entry name" value="Peptidase_M17_C"/>
</dbReference>
<dbReference type="NCBIfam" id="NF003450">
    <property type="entry name" value="PRK05015.1"/>
    <property type="match status" value="1"/>
</dbReference>
<dbReference type="PANTHER" id="PTHR11963">
    <property type="entry name" value="LEUCINE AMINOPEPTIDASE-RELATED"/>
    <property type="match status" value="1"/>
</dbReference>
<dbReference type="PANTHER" id="PTHR11963:SF20">
    <property type="entry name" value="PEPTIDASE B"/>
    <property type="match status" value="1"/>
</dbReference>
<dbReference type="Pfam" id="PF12404">
    <property type="entry name" value="DUF3663"/>
    <property type="match status" value="1"/>
</dbReference>
<dbReference type="Pfam" id="PF00883">
    <property type="entry name" value="Peptidase_M17"/>
    <property type="match status" value="1"/>
</dbReference>
<dbReference type="PIRSF" id="PIRSF036388">
    <property type="entry name" value="Ctsl_amnpptdse_B"/>
    <property type="match status" value="1"/>
</dbReference>
<dbReference type="PRINTS" id="PR00481">
    <property type="entry name" value="LAMNOPPTDASE"/>
</dbReference>
<dbReference type="SUPFAM" id="SSF53187">
    <property type="entry name" value="Zn-dependent exopeptidases"/>
    <property type="match status" value="1"/>
</dbReference>
<dbReference type="PROSITE" id="PS00631">
    <property type="entry name" value="CYTOSOL_AP"/>
    <property type="match status" value="1"/>
</dbReference>
<gene>
    <name evidence="1" type="primary">pepB</name>
    <name type="ordered locus">ECIAI39_2724</name>
</gene>
<keyword id="KW-0031">Aminopeptidase</keyword>
<keyword id="KW-0963">Cytoplasm</keyword>
<keyword id="KW-0378">Hydrolase</keyword>
<keyword id="KW-0464">Manganese</keyword>
<keyword id="KW-0479">Metal-binding</keyword>
<keyword id="KW-0645">Protease</keyword>
<organism>
    <name type="scientific">Escherichia coli O7:K1 (strain IAI39 / ExPEC)</name>
    <dbReference type="NCBI Taxonomy" id="585057"/>
    <lineage>
        <taxon>Bacteria</taxon>
        <taxon>Pseudomonadati</taxon>
        <taxon>Pseudomonadota</taxon>
        <taxon>Gammaproteobacteria</taxon>
        <taxon>Enterobacterales</taxon>
        <taxon>Enterobacteriaceae</taxon>
        <taxon>Escherichia</taxon>
    </lineage>
</organism>
<name>PEPB_ECO7I</name>
<proteinExistence type="inferred from homology"/>
<sequence length="427" mass="46266">MTEAMKITLSTQPADARWGEKATYSINNDGITLHLNGADDLGLIQRAARKIDGLGIKHVQLSGEDWDADRCWAFWQGYKAPKGTRKVEWPDLDDAQRQELDNRLMIIDWVRDTINAPAEELGPSQLAQRAVDLISNVAGDRVTYRITKGEDLRDQGYMGLHTVGRGSERSPVLLALDYNPTGDKEAPVYACLVGKGITFDSGGYSIKQTAFMDSMKSDMGGAATVTGALAFAITRGLNKRVKLFLCCADNLISGNAFKLGDIITYRNGKKVEVMNTDAEGRLVLADGLIDASAQKPELIIDAATLTGAAKTALGNDYHALFSFDDALAARLLASASQENEPFWRLPLAEFHRSQLPSNFAELNNTGSAAYPAGASTAAGFLSHFVENYQQGWLHIDCSATYRKAPVEQWSAGATGLGVRTIANLLTA</sequence>
<reference key="1">
    <citation type="journal article" date="2009" name="PLoS Genet.">
        <title>Organised genome dynamics in the Escherichia coli species results in highly diverse adaptive paths.</title>
        <authorList>
            <person name="Touchon M."/>
            <person name="Hoede C."/>
            <person name="Tenaillon O."/>
            <person name="Barbe V."/>
            <person name="Baeriswyl S."/>
            <person name="Bidet P."/>
            <person name="Bingen E."/>
            <person name="Bonacorsi S."/>
            <person name="Bouchier C."/>
            <person name="Bouvet O."/>
            <person name="Calteau A."/>
            <person name="Chiapello H."/>
            <person name="Clermont O."/>
            <person name="Cruveiller S."/>
            <person name="Danchin A."/>
            <person name="Diard M."/>
            <person name="Dossat C."/>
            <person name="Karoui M.E."/>
            <person name="Frapy E."/>
            <person name="Garry L."/>
            <person name="Ghigo J.M."/>
            <person name="Gilles A.M."/>
            <person name="Johnson J."/>
            <person name="Le Bouguenec C."/>
            <person name="Lescat M."/>
            <person name="Mangenot S."/>
            <person name="Martinez-Jehanne V."/>
            <person name="Matic I."/>
            <person name="Nassif X."/>
            <person name="Oztas S."/>
            <person name="Petit M.A."/>
            <person name="Pichon C."/>
            <person name="Rouy Z."/>
            <person name="Ruf C.S."/>
            <person name="Schneider D."/>
            <person name="Tourret J."/>
            <person name="Vacherie B."/>
            <person name="Vallenet D."/>
            <person name="Medigue C."/>
            <person name="Rocha E.P.C."/>
            <person name="Denamur E."/>
        </authorList>
    </citation>
    <scope>NUCLEOTIDE SEQUENCE [LARGE SCALE GENOMIC DNA]</scope>
    <source>
        <strain>IAI39 / ExPEC</strain>
    </source>
</reference>
<protein>
    <recommendedName>
        <fullName evidence="1">Peptidase B</fullName>
        <ecNumber evidence="1">3.4.11.23</ecNumber>
    </recommendedName>
    <alternativeName>
        <fullName evidence="1">Aminopeptidase B</fullName>
    </alternativeName>
</protein>
<comment type="function">
    <text evidence="1">Probably plays an important role in intracellular peptide degradation.</text>
</comment>
<comment type="catalytic activity">
    <reaction evidence="1">
        <text>Release of an N-terminal amino acid, Xaa, from a peptide or arylamide. Xaa is preferably Glu or Asp but may be other amino acids, including Leu, Met, His, Cys and Gln.</text>
        <dbReference type="EC" id="3.4.11.23"/>
    </reaction>
</comment>
<comment type="cofactor">
    <cofactor evidence="1">
        <name>Mn(2+)</name>
        <dbReference type="ChEBI" id="CHEBI:29035"/>
    </cofactor>
    <text evidence="1">Binds 2 manganese ions per subunit.</text>
</comment>
<comment type="subunit">
    <text evidence="1">Homohexamer.</text>
</comment>
<comment type="subcellular location">
    <subcellularLocation>
        <location evidence="1">Cytoplasm</location>
    </subcellularLocation>
</comment>
<comment type="similarity">
    <text evidence="1">Belongs to the peptidase M17 family.</text>
</comment>
<evidence type="ECO:0000255" key="1">
    <source>
        <dbReference type="HAMAP-Rule" id="MF_00504"/>
    </source>
</evidence>
<accession>B7NRH2</accession>